<evidence type="ECO:0000255" key="1">
    <source>
        <dbReference type="HAMAP-Rule" id="MF_00019"/>
    </source>
</evidence>
<proteinExistence type="inferred from homology"/>
<feature type="chain" id="PRO_1000001744" description="Phosphate acyltransferase">
    <location>
        <begin position="1"/>
        <end position="328"/>
    </location>
</feature>
<protein>
    <recommendedName>
        <fullName evidence="1">Phosphate acyltransferase</fullName>
        <ecNumber evidence="1">2.3.1.274</ecNumber>
    </recommendedName>
    <alternativeName>
        <fullName evidence="1">Acyl-ACP phosphotransacylase</fullName>
    </alternativeName>
    <alternativeName>
        <fullName evidence="1">Acyl-[acyl-carrier-protein]--phosphate acyltransferase</fullName>
    </alternativeName>
    <alternativeName>
        <fullName evidence="1">Phosphate-acyl-ACP acyltransferase</fullName>
    </alternativeName>
</protein>
<comment type="function">
    <text evidence="1">Catalyzes the reversible formation of acyl-phosphate (acyl-PO(4)) from acyl-[acyl-carrier-protein] (acyl-ACP). This enzyme utilizes acyl-ACP as fatty acyl donor, but not acyl-CoA.</text>
</comment>
<comment type="catalytic activity">
    <reaction evidence="1">
        <text>a fatty acyl-[ACP] + phosphate = an acyl phosphate + holo-[ACP]</text>
        <dbReference type="Rhea" id="RHEA:42292"/>
        <dbReference type="Rhea" id="RHEA-COMP:9685"/>
        <dbReference type="Rhea" id="RHEA-COMP:14125"/>
        <dbReference type="ChEBI" id="CHEBI:43474"/>
        <dbReference type="ChEBI" id="CHEBI:59918"/>
        <dbReference type="ChEBI" id="CHEBI:64479"/>
        <dbReference type="ChEBI" id="CHEBI:138651"/>
        <dbReference type="EC" id="2.3.1.274"/>
    </reaction>
</comment>
<comment type="pathway">
    <text evidence="1">Lipid metabolism; phospholipid metabolism.</text>
</comment>
<comment type="subunit">
    <text evidence="1">Homodimer. Probably interacts with PlsY.</text>
</comment>
<comment type="subcellular location">
    <subcellularLocation>
        <location evidence="1">Cytoplasm</location>
    </subcellularLocation>
    <text evidence="1">Associated with the membrane possibly through PlsY.</text>
</comment>
<comment type="similarity">
    <text evidence="1">Belongs to the PlsX family.</text>
</comment>
<reference key="1">
    <citation type="submission" date="2006-12" db="EMBL/GenBank/DDBJ databases">
        <authorList>
            <person name="Fouts D.E."/>
            <person name="Nelson K.E."/>
            <person name="Sebastian Y."/>
        </authorList>
    </citation>
    <scope>NUCLEOTIDE SEQUENCE [LARGE SCALE GENOMIC DNA]</scope>
    <source>
        <strain>81-176</strain>
    </source>
</reference>
<dbReference type="EC" id="2.3.1.274" evidence="1"/>
<dbReference type="EMBL" id="CP000538">
    <property type="protein sequence ID" value="EAQ73225.1"/>
    <property type="molecule type" value="Genomic_DNA"/>
</dbReference>
<dbReference type="RefSeq" id="WP_002868169.1">
    <property type="nucleotide sequence ID" value="NC_008787.1"/>
</dbReference>
<dbReference type="SMR" id="A1VY48"/>
<dbReference type="KEGG" id="cjj:CJJ81176_0351"/>
<dbReference type="eggNOG" id="COG0416">
    <property type="taxonomic scope" value="Bacteria"/>
</dbReference>
<dbReference type="HOGENOM" id="CLU_039379_1_1_7"/>
<dbReference type="UniPathway" id="UPA00085"/>
<dbReference type="Proteomes" id="UP000000646">
    <property type="component" value="Chromosome"/>
</dbReference>
<dbReference type="GO" id="GO:0005737">
    <property type="term" value="C:cytoplasm"/>
    <property type="evidence" value="ECO:0007669"/>
    <property type="project" value="UniProtKB-SubCell"/>
</dbReference>
<dbReference type="GO" id="GO:0043811">
    <property type="term" value="F:phosphate:acyl-[acyl carrier protein] acyltransferase activity"/>
    <property type="evidence" value="ECO:0007669"/>
    <property type="project" value="UniProtKB-UniRule"/>
</dbReference>
<dbReference type="GO" id="GO:0006633">
    <property type="term" value="P:fatty acid biosynthetic process"/>
    <property type="evidence" value="ECO:0007669"/>
    <property type="project" value="UniProtKB-UniRule"/>
</dbReference>
<dbReference type="GO" id="GO:0008654">
    <property type="term" value="P:phospholipid biosynthetic process"/>
    <property type="evidence" value="ECO:0007669"/>
    <property type="project" value="UniProtKB-KW"/>
</dbReference>
<dbReference type="Gene3D" id="3.40.718.10">
    <property type="entry name" value="Isopropylmalate Dehydrogenase"/>
    <property type="match status" value="1"/>
</dbReference>
<dbReference type="HAMAP" id="MF_00019">
    <property type="entry name" value="PlsX"/>
    <property type="match status" value="1"/>
</dbReference>
<dbReference type="InterPro" id="IPR003664">
    <property type="entry name" value="FA_synthesis"/>
</dbReference>
<dbReference type="InterPro" id="IPR012281">
    <property type="entry name" value="Phospholipid_synth_PlsX-like"/>
</dbReference>
<dbReference type="NCBIfam" id="TIGR00182">
    <property type="entry name" value="plsX"/>
    <property type="match status" value="1"/>
</dbReference>
<dbReference type="PANTHER" id="PTHR30100">
    <property type="entry name" value="FATTY ACID/PHOSPHOLIPID SYNTHESIS PROTEIN PLSX"/>
    <property type="match status" value="1"/>
</dbReference>
<dbReference type="PANTHER" id="PTHR30100:SF1">
    <property type="entry name" value="PHOSPHATE ACYLTRANSFERASE"/>
    <property type="match status" value="1"/>
</dbReference>
<dbReference type="Pfam" id="PF02504">
    <property type="entry name" value="FA_synthesis"/>
    <property type="match status" value="1"/>
</dbReference>
<dbReference type="PIRSF" id="PIRSF002465">
    <property type="entry name" value="Phsphlp_syn_PlsX"/>
    <property type="match status" value="1"/>
</dbReference>
<dbReference type="SUPFAM" id="SSF53659">
    <property type="entry name" value="Isocitrate/Isopropylmalate dehydrogenase-like"/>
    <property type="match status" value="1"/>
</dbReference>
<organism>
    <name type="scientific">Campylobacter jejuni subsp. jejuni serotype O:23/36 (strain 81-176)</name>
    <dbReference type="NCBI Taxonomy" id="354242"/>
    <lineage>
        <taxon>Bacteria</taxon>
        <taxon>Pseudomonadati</taxon>
        <taxon>Campylobacterota</taxon>
        <taxon>Epsilonproteobacteria</taxon>
        <taxon>Campylobacterales</taxon>
        <taxon>Campylobacteraceae</taxon>
        <taxon>Campylobacter</taxon>
    </lineage>
</organism>
<gene>
    <name evidence="1" type="primary">plsX</name>
    <name type="ordered locus">CJJ81176_0351</name>
</gene>
<sequence>MINIAIDAMGGDFGEKPIIEGVLKALEAKPFNAILVGNSKILKPLIPKKLEQYIQYEEASEIFSMNENATDALKNKETTIYKAINLLKEKKVDAVVSAGHSGASMSLATLRLGRLKGISRPAIATLMPNIVNKTLLLDVGANTDCKAENLFQFAIMGEVYAREIMQIQKPRLALLSNGEEECKGNELTKESHQLMKKIPNFIGNAEGRDIFNGEIDVLVCDGFDGNVILKACEGVATAIFQLLKNEVKQSFISKIGALLMKPSFKKLKKHTDWQEYGGAPLLGVNGCVIISHGKSDSRAIKNAIFQAINFSQSHINKLIENELGKYNA</sequence>
<name>PLSX_CAMJJ</name>
<keyword id="KW-0963">Cytoplasm</keyword>
<keyword id="KW-0444">Lipid biosynthesis</keyword>
<keyword id="KW-0443">Lipid metabolism</keyword>
<keyword id="KW-0594">Phospholipid biosynthesis</keyword>
<keyword id="KW-1208">Phospholipid metabolism</keyword>
<keyword id="KW-0808">Transferase</keyword>
<accession>A1VY48</accession>